<organism>
    <name type="scientific">Natranaerobius thermophilus (strain ATCC BAA-1301 / DSM 18059 / JW/NM-WN-LF)</name>
    <dbReference type="NCBI Taxonomy" id="457570"/>
    <lineage>
        <taxon>Bacteria</taxon>
        <taxon>Bacillati</taxon>
        <taxon>Bacillota</taxon>
        <taxon>Clostridia</taxon>
        <taxon>Natranaerobiales</taxon>
        <taxon>Natranaerobiaceae</taxon>
        <taxon>Natranaerobius</taxon>
    </lineage>
</organism>
<evidence type="ECO:0000255" key="1">
    <source>
        <dbReference type="HAMAP-Rule" id="MF_00489"/>
    </source>
</evidence>
<accession>B2A5Z1</accession>
<dbReference type="EMBL" id="CP001034">
    <property type="protein sequence ID" value="ACB85408.1"/>
    <property type="molecule type" value="Genomic_DNA"/>
</dbReference>
<dbReference type="RefSeq" id="WP_012448273.1">
    <property type="nucleotide sequence ID" value="NC_010718.1"/>
</dbReference>
<dbReference type="FunCoup" id="B2A5Z1">
    <property type="interactions" value="23"/>
</dbReference>
<dbReference type="STRING" id="457570.Nther_1836"/>
<dbReference type="KEGG" id="nth:Nther_1836"/>
<dbReference type="eggNOG" id="COG1671">
    <property type="taxonomic scope" value="Bacteria"/>
</dbReference>
<dbReference type="HOGENOM" id="CLU_106619_0_0_9"/>
<dbReference type="InParanoid" id="B2A5Z1"/>
<dbReference type="OrthoDB" id="9798918at2"/>
<dbReference type="Proteomes" id="UP000001683">
    <property type="component" value="Chromosome"/>
</dbReference>
<dbReference type="HAMAP" id="MF_00489">
    <property type="entry name" value="UPF0178"/>
    <property type="match status" value="1"/>
</dbReference>
<dbReference type="InterPro" id="IPR003791">
    <property type="entry name" value="UPF0178"/>
</dbReference>
<dbReference type="NCBIfam" id="NF001095">
    <property type="entry name" value="PRK00124.1"/>
    <property type="match status" value="1"/>
</dbReference>
<dbReference type="PANTHER" id="PTHR35146">
    <property type="entry name" value="UPF0178 PROTEIN YAII"/>
    <property type="match status" value="1"/>
</dbReference>
<dbReference type="PANTHER" id="PTHR35146:SF1">
    <property type="entry name" value="UPF0178 PROTEIN YAII"/>
    <property type="match status" value="1"/>
</dbReference>
<dbReference type="Pfam" id="PF02639">
    <property type="entry name" value="DUF188"/>
    <property type="match status" value="1"/>
</dbReference>
<sequence>MKILVDADSCPVKDIVFQVAREYSVKVVVVKDLSHEIDSNYAEVITADQGRDSVDLIIVNNTDKGDIVITQDYGLASLALTKQAIVLHPNGWKFTEENIDGLLLNRHINQQIRQRNGRHTKTPKRKSKDDNNFKNLLKEIIVQMKSS</sequence>
<name>Y1836_NATTJ</name>
<protein>
    <recommendedName>
        <fullName evidence="1">UPF0178 protein Nther_1836</fullName>
    </recommendedName>
</protein>
<comment type="similarity">
    <text evidence="1">Belongs to the UPF0178 family.</text>
</comment>
<keyword id="KW-1185">Reference proteome</keyword>
<gene>
    <name type="ordered locus">Nther_1836</name>
</gene>
<feature type="chain" id="PRO_1000126201" description="UPF0178 protein Nther_1836">
    <location>
        <begin position="1"/>
        <end position="147"/>
    </location>
</feature>
<proteinExistence type="inferred from homology"/>
<reference key="1">
    <citation type="submission" date="2008-04" db="EMBL/GenBank/DDBJ databases">
        <title>Complete sequence of chromosome of Natranaerobius thermophilus JW/NM-WN-LF.</title>
        <authorList>
            <consortium name="US DOE Joint Genome Institute"/>
            <person name="Copeland A."/>
            <person name="Lucas S."/>
            <person name="Lapidus A."/>
            <person name="Glavina del Rio T."/>
            <person name="Dalin E."/>
            <person name="Tice H."/>
            <person name="Bruce D."/>
            <person name="Goodwin L."/>
            <person name="Pitluck S."/>
            <person name="Chertkov O."/>
            <person name="Brettin T."/>
            <person name="Detter J.C."/>
            <person name="Han C."/>
            <person name="Kuske C.R."/>
            <person name="Schmutz J."/>
            <person name="Larimer F."/>
            <person name="Land M."/>
            <person name="Hauser L."/>
            <person name="Kyrpides N."/>
            <person name="Lykidis A."/>
            <person name="Mesbah N.M."/>
            <person name="Wiegel J."/>
        </authorList>
    </citation>
    <scope>NUCLEOTIDE SEQUENCE [LARGE SCALE GENOMIC DNA]</scope>
    <source>
        <strain>ATCC BAA-1301 / DSM 18059 / JW/NM-WN-LF</strain>
    </source>
</reference>